<dbReference type="EC" id="6.3.5.-" evidence="1"/>
<dbReference type="EMBL" id="FM177140">
    <property type="protein sequence ID" value="CAQ66309.1"/>
    <property type="molecule type" value="Genomic_DNA"/>
</dbReference>
<dbReference type="SMR" id="B3WD58"/>
<dbReference type="KEGG" id="lcb:LCABL_12240"/>
<dbReference type="HOGENOM" id="CLU_019240_0_0_9"/>
<dbReference type="GO" id="GO:0050566">
    <property type="term" value="F:asparaginyl-tRNA synthase (glutamine-hydrolyzing) activity"/>
    <property type="evidence" value="ECO:0007669"/>
    <property type="project" value="RHEA"/>
</dbReference>
<dbReference type="GO" id="GO:0005524">
    <property type="term" value="F:ATP binding"/>
    <property type="evidence" value="ECO:0007669"/>
    <property type="project" value="UniProtKB-KW"/>
</dbReference>
<dbReference type="GO" id="GO:0050567">
    <property type="term" value="F:glutaminyl-tRNA synthase (glutamine-hydrolyzing) activity"/>
    <property type="evidence" value="ECO:0007669"/>
    <property type="project" value="UniProtKB-UniRule"/>
</dbReference>
<dbReference type="GO" id="GO:0070681">
    <property type="term" value="P:glutaminyl-tRNAGln biosynthesis via transamidation"/>
    <property type="evidence" value="ECO:0007669"/>
    <property type="project" value="TreeGrafter"/>
</dbReference>
<dbReference type="GO" id="GO:0006412">
    <property type="term" value="P:translation"/>
    <property type="evidence" value="ECO:0007669"/>
    <property type="project" value="UniProtKB-UniRule"/>
</dbReference>
<dbReference type="FunFam" id="1.10.10.410:FF:000001">
    <property type="entry name" value="Aspartyl/glutamyl-tRNA(Asn/Gln) amidotransferase subunit B"/>
    <property type="match status" value="1"/>
</dbReference>
<dbReference type="FunFam" id="1.10.150.380:FF:000001">
    <property type="entry name" value="Aspartyl/glutamyl-tRNA(Asn/Gln) amidotransferase subunit B"/>
    <property type="match status" value="1"/>
</dbReference>
<dbReference type="Gene3D" id="1.10.10.410">
    <property type="match status" value="1"/>
</dbReference>
<dbReference type="Gene3D" id="1.10.150.380">
    <property type="entry name" value="GatB domain, N-terminal subdomain"/>
    <property type="match status" value="1"/>
</dbReference>
<dbReference type="HAMAP" id="MF_00121">
    <property type="entry name" value="GatB"/>
    <property type="match status" value="1"/>
</dbReference>
<dbReference type="InterPro" id="IPR017959">
    <property type="entry name" value="Asn/Gln-tRNA_amidoTrfase_suB/E"/>
</dbReference>
<dbReference type="InterPro" id="IPR006075">
    <property type="entry name" value="Asn/Gln-tRNA_Trfase_suB/E_cat"/>
</dbReference>
<dbReference type="InterPro" id="IPR018027">
    <property type="entry name" value="Asn/Gln_amidotransferase"/>
</dbReference>
<dbReference type="InterPro" id="IPR003789">
    <property type="entry name" value="Asn/Gln_tRNA_amidoTrase-B-like"/>
</dbReference>
<dbReference type="InterPro" id="IPR004413">
    <property type="entry name" value="GatB"/>
</dbReference>
<dbReference type="InterPro" id="IPR042114">
    <property type="entry name" value="GatB_C_1"/>
</dbReference>
<dbReference type="InterPro" id="IPR023168">
    <property type="entry name" value="GatB_Yqey_C_2"/>
</dbReference>
<dbReference type="InterPro" id="IPR017958">
    <property type="entry name" value="Gln-tRNA_amidoTrfase_suB_CS"/>
</dbReference>
<dbReference type="InterPro" id="IPR014746">
    <property type="entry name" value="Gln_synth/guanido_kin_cat_dom"/>
</dbReference>
<dbReference type="NCBIfam" id="TIGR00133">
    <property type="entry name" value="gatB"/>
    <property type="match status" value="1"/>
</dbReference>
<dbReference type="NCBIfam" id="NF004011">
    <property type="entry name" value="PRK05477.1-1"/>
    <property type="match status" value="1"/>
</dbReference>
<dbReference type="NCBIfam" id="NF004012">
    <property type="entry name" value="PRK05477.1-2"/>
    <property type="match status" value="1"/>
</dbReference>
<dbReference type="NCBIfam" id="NF004014">
    <property type="entry name" value="PRK05477.1-4"/>
    <property type="match status" value="1"/>
</dbReference>
<dbReference type="PANTHER" id="PTHR11659">
    <property type="entry name" value="GLUTAMYL-TRNA GLN AMIDOTRANSFERASE SUBUNIT B MITOCHONDRIAL AND PROKARYOTIC PET112-RELATED"/>
    <property type="match status" value="1"/>
</dbReference>
<dbReference type="PANTHER" id="PTHR11659:SF0">
    <property type="entry name" value="GLUTAMYL-TRNA(GLN) AMIDOTRANSFERASE SUBUNIT B, MITOCHONDRIAL"/>
    <property type="match status" value="1"/>
</dbReference>
<dbReference type="Pfam" id="PF02934">
    <property type="entry name" value="GatB_N"/>
    <property type="match status" value="1"/>
</dbReference>
<dbReference type="Pfam" id="PF02637">
    <property type="entry name" value="GatB_Yqey"/>
    <property type="match status" value="1"/>
</dbReference>
<dbReference type="SMART" id="SM00845">
    <property type="entry name" value="GatB_Yqey"/>
    <property type="match status" value="1"/>
</dbReference>
<dbReference type="SUPFAM" id="SSF89095">
    <property type="entry name" value="GatB/YqeY motif"/>
    <property type="match status" value="1"/>
</dbReference>
<dbReference type="SUPFAM" id="SSF55931">
    <property type="entry name" value="Glutamine synthetase/guanido kinase"/>
    <property type="match status" value="1"/>
</dbReference>
<dbReference type="PROSITE" id="PS01234">
    <property type="entry name" value="GATB"/>
    <property type="match status" value="1"/>
</dbReference>
<feature type="chain" id="PRO_1000095216" description="Aspartyl/glutamyl-tRNA(Asn/Gln) amidotransferase subunit B">
    <location>
        <begin position="1"/>
        <end position="476"/>
    </location>
</feature>
<accession>B3WD58</accession>
<name>GATB_LACCB</name>
<comment type="function">
    <text evidence="1">Allows the formation of correctly charged Asn-tRNA(Asn) or Gln-tRNA(Gln) through the transamidation of misacylated Asp-tRNA(Asn) or Glu-tRNA(Gln) in organisms which lack either or both of asparaginyl-tRNA or glutaminyl-tRNA synthetases. The reaction takes place in the presence of glutamine and ATP through an activated phospho-Asp-tRNA(Asn) or phospho-Glu-tRNA(Gln).</text>
</comment>
<comment type="catalytic activity">
    <reaction evidence="1">
        <text>L-glutamyl-tRNA(Gln) + L-glutamine + ATP + H2O = L-glutaminyl-tRNA(Gln) + L-glutamate + ADP + phosphate + H(+)</text>
        <dbReference type="Rhea" id="RHEA:17521"/>
        <dbReference type="Rhea" id="RHEA-COMP:9681"/>
        <dbReference type="Rhea" id="RHEA-COMP:9684"/>
        <dbReference type="ChEBI" id="CHEBI:15377"/>
        <dbReference type="ChEBI" id="CHEBI:15378"/>
        <dbReference type="ChEBI" id="CHEBI:29985"/>
        <dbReference type="ChEBI" id="CHEBI:30616"/>
        <dbReference type="ChEBI" id="CHEBI:43474"/>
        <dbReference type="ChEBI" id="CHEBI:58359"/>
        <dbReference type="ChEBI" id="CHEBI:78520"/>
        <dbReference type="ChEBI" id="CHEBI:78521"/>
        <dbReference type="ChEBI" id="CHEBI:456216"/>
    </reaction>
</comment>
<comment type="catalytic activity">
    <reaction evidence="1">
        <text>L-aspartyl-tRNA(Asn) + L-glutamine + ATP + H2O = L-asparaginyl-tRNA(Asn) + L-glutamate + ADP + phosphate + 2 H(+)</text>
        <dbReference type="Rhea" id="RHEA:14513"/>
        <dbReference type="Rhea" id="RHEA-COMP:9674"/>
        <dbReference type="Rhea" id="RHEA-COMP:9677"/>
        <dbReference type="ChEBI" id="CHEBI:15377"/>
        <dbReference type="ChEBI" id="CHEBI:15378"/>
        <dbReference type="ChEBI" id="CHEBI:29985"/>
        <dbReference type="ChEBI" id="CHEBI:30616"/>
        <dbReference type="ChEBI" id="CHEBI:43474"/>
        <dbReference type="ChEBI" id="CHEBI:58359"/>
        <dbReference type="ChEBI" id="CHEBI:78515"/>
        <dbReference type="ChEBI" id="CHEBI:78516"/>
        <dbReference type="ChEBI" id="CHEBI:456216"/>
    </reaction>
</comment>
<comment type="subunit">
    <text evidence="1">Heterotrimer of A, B and C subunits.</text>
</comment>
<comment type="similarity">
    <text evidence="1">Belongs to the GatB/GatE family. GatB subfamily.</text>
</comment>
<protein>
    <recommendedName>
        <fullName evidence="1">Aspartyl/glutamyl-tRNA(Asn/Gln) amidotransferase subunit B</fullName>
        <shortName evidence="1">Asp/Glu-ADT subunit B</shortName>
        <ecNumber evidence="1">6.3.5.-</ecNumber>
    </recommendedName>
</protein>
<proteinExistence type="inferred from homology"/>
<reference key="1">
    <citation type="submission" date="2008-06" db="EMBL/GenBank/DDBJ databases">
        <title>Lactobacillus casei BL23 complete genome sequence.</title>
        <authorList>
            <person name="Maze A."/>
            <person name="Boel G."/>
            <person name="Bourand A."/>
            <person name="Loux V."/>
            <person name="Gibrat J.F."/>
            <person name="Zuniga M."/>
            <person name="Hartke A."/>
            <person name="Deutscher J."/>
        </authorList>
    </citation>
    <scope>NUCLEOTIDE SEQUENCE [LARGE SCALE GENOMIC DNA]</scope>
    <source>
        <strain>BL23</strain>
    </source>
</reference>
<sequence length="476" mass="53353">MNFETTIGLEVHVELKTKSKMFSPSPVTYGQEPNTQTNVIDWGFPGVLPSINRGAYQLGIMVGLALHADITRLTHFDRKNYFYPDNPKAYQITQSEKPLGTNGWVEIEVDGKKKKIGIAELHVEEDAGKNQHEDDGYSYVDLNRQGTPLVEIVSKPDITSPEEAYAYLETLRQIVQFTGASDVKMEEGSMRVDTNLSVRPIGQEHFGTKTEIKNLNSFVHVRDGLAFEEKRQQAVLLSGGEVRQETRRWDPDAKETLLMRVKEGADDYRYFPEPDLPPVAVSQKWIDDIQASLPQPPAERRQRYIEDWGIPAYDAGVLTQTKEMSDFFEATVAQGADAKQASNWLMGEVSGFLNAQHVELGQVALTPAHLAGMIKLIGDGTISSKMAKKVFKEIIQHDTDPDKWVHEKGLIQLSDPAKLTPIIDEILDNNQQSIDDFKAGKDRAIGFLVGQIMKQTHGQANPKVVNQILMAEIKQR</sequence>
<keyword id="KW-0067">ATP-binding</keyword>
<keyword id="KW-0436">Ligase</keyword>
<keyword id="KW-0547">Nucleotide-binding</keyword>
<keyword id="KW-0648">Protein biosynthesis</keyword>
<evidence type="ECO:0000255" key="1">
    <source>
        <dbReference type="HAMAP-Rule" id="MF_00121"/>
    </source>
</evidence>
<organism>
    <name type="scientific">Lacticaseibacillus casei (strain BL23)</name>
    <name type="common">Lactobacillus casei</name>
    <dbReference type="NCBI Taxonomy" id="543734"/>
    <lineage>
        <taxon>Bacteria</taxon>
        <taxon>Bacillati</taxon>
        <taxon>Bacillota</taxon>
        <taxon>Bacilli</taxon>
        <taxon>Lactobacillales</taxon>
        <taxon>Lactobacillaceae</taxon>
        <taxon>Lacticaseibacillus</taxon>
    </lineage>
</organism>
<gene>
    <name evidence="1" type="primary">gatB</name>
    <name type="ordered locus">LCABL_12240</name>
</gene>